<keyword id="KW-0378">Hydrolase</keyword>
<keyword id="KW-0546">Nucleotide metabolism</keyword>
<keyword id="KW-1185">Reference proteome</keyword>
<name>DUT_METAC</name>
<dbReference type="EC" id="3.6.1.23" evidence="1"/>
<dbReference type="EMBL" id="AE010299">
    <property type="protein sequence ID" value="AAM03887.1"/>
    <property type="molecule type" value="Genomic_DNA"/>
</dbReference>
<dbReference type="RefSeq" id="WP_011020492.1">
    <property type="nucleotide sequence ID" value="NC_003552.1"/>
</dbReference>
<dbReference type="SMR" id="Q8TGX9"/>
<dbReference type="FunCoup" id="Q8TGX9">
    <property type="interactions" value="20"/>
</dbReference>
<dbReference type="STRING" id="188937.MA_0440"/>
<dbReference type="EnsemblBacteria" id="AAM03887">
    <property type="protein sequence ID" value="AAM03887"/>
    <property type="gene ID" value="MA_0440"/>
</dbReference>
<dbReference type="GeneID" id="1472332"/>
<dbReference type="KEGG" id="mac:MA_0440"/>
<dbReference type="HOGENOM" id="CLU_103451_2_0_2"/>
<dbReference type="InParanoid" id="Q8TGX9"/>
<dbReference type="OrthoDB" id="45265at2157"/>
<dbReference type="PhylomeDB" id="Q8TGX9"/>
<dbReference type="UniPathway" id="UPA00610">
    <property type="reaction ID" value="UER00666"/>
</dbReference>
<dbReference type="Proteomes" id="UP000002487">
    <property type="component" value="Chromosome"/>
</dbReference>
<dbReference type="GO" id="GO:0008829">
    <property type="term" value="F:dCTP deaminase activity"/>
    <property type="evidence" value="ECO:0007669"/>
    <property type="project" value="InterPro"/>
</dbReference>
<dbReference type="GO" id="GO:0004170">
    <property type="term" value="F:dUTP diphosphatase activity"/>
    <property type="evidence" value="ECO:0007669"/>
    <property type="project" value="UniProtKB-UniRule"/>
</dbReference>
<dbReference type="GO" id="GO:0006226">
    <property type="term" value="P:dUMP biosynthetic process"/>
    <property type="evidence" value="ECO:0007669"/>
    <property type="project" value="UniProtKB-UniRule"/>
</dbReference>
<dbReference type="GO" id="GO:0006229">
    <property type="term" value="P:dUTP biosynthetic process"/>
    <property type="evidence" value="ECO:0007669"/>
    <property type="project" value="InterPro"/>
</dbReference>
<dbReference type="CDD" id="cd07557">
    <property type="entry name" value="trimeric_dUTPase"/>
    <property type="match status" value="1"/>
</dbReference>
<dbReference type="Gene3D" id="2.70.40.10">
    <property type="match status" value="1"/>
</dbReference>
<dbReference type="HAMAP" id="MF_00635">
    <property type="entry name" value="dUTPase_arch"/>
    <property type="match status" value="1"/>
</dbReference>
<dbReference type="InterPro" id="IPR011962">
    <property type="entry name" value="dCTP_deaminase"/>
</dbReference>
<dbReference type="InterPro" id="IPR036157">
    <property type="entry name" value="dUTPase-like_sf"/>
</dbReference>
<dbReference type="InterPro" id="IPR023537">
    <property type="entry name" value="dUTPase_archaeal"/>
</dbReference>
<dbReference type="InterPro" id="IPR033704">
    <property type="entry name" value="dUTPase_trimeric"/>
</dbReference>
<dbReference type="NCBIfam" id="NF002598">
    <property type="entry name" value="PRK02253.1"/>
    <property type="match status" value="1"/>
</dbReference>
<dbReference type="PANTHER" id="PTHR42680">
    <property type="entry name" value="DCTP DEAMINASE"/>
    <property type="match status" value="1"/>
</dbReference>
<dbReference type="PANTHER" id="PTHR42680:SF1">
    <property type="entry name" value="DEOXYURIDINE 5'-TRIPHOSPHATE NUCLEOTIDOHYDROLASE"/>
    <property type="match status" value="1"/>
</dbReference>
<dbReference type="Pfam" id="PF22769">
    <property type="entry name" value="DCD"/>
    <property type="match status" value="1"/>
</dbReference>
<dbReference type="SUPFAM" id="SSF51283">
    <property type="entry name" value="dUTPase-like"/>
    <property type="match status" value="1"/>
</dbReference>
<gene>
    <name evidence="1" type="primary">dut</name>
    <name type="ordered locus">MA_0440</name>
</gene>
<reference key="1">
    <citation type="journal article" date="2002" name="Genome Res.">
        <title>The genome of Methanosarcina acetivorans reveals extensive metabolic and physiological diversity.</title>
        <authorList>
            <person name="Galagan J.E."/>
            <person name="Nusbaum C."/>
            <person name="Roy A."/>
            <person name="Endrizzi M.G."/>
            <person name="Macdonald P."/>
            <person name="FitzHugh W."/>
            <person name="Calvo S."/>
            <person name="Engels R."/>
            <person name="Smirnov S."/>
            <person name="Atnoor D."/>
            <person name="Brown A."/>
            <person name="Allen N."/>
            <person name="Naylor J."/>
            <person name="Stange-Thomann N."/>
            <person name="DeArellano K."/>
            <person name="Johnson R."/>
            <person name="Linton L."/>
            <person name="McEwan P."/>
            <person name="McKernan K."/>
            <person name="Talamas J."/>
            <person name="Tirrell A."/>
            <person name="Ye W."/>
            <person name="Zimmer A."/>
            <person name="Barber R.D."/>
            <person name="Cann I."/>
            <person name="Graham D.E."/>
            <person name="Grahame D.A."/>
            <person name="Guss A.M."/>
            <person name="Hedderich R."/>
            <person name="Ingram-Smith C."/>
            <person name="Kuettner H.C."/>
            <person name="Krzycki J.A."/>
            <person name="Leigh J.A."/>
            <person name="Li W."/>
            <person name="Liu J."/>
            <person name="Mukhopadhyay B."/>
            <person name="Reeve J.N."/>
            <person name="Smith K."/>
            <person name="Springer T.A."/>
            <person name="Umayam L.A."/>
            <person name="White O."/>
            <person name="White R.H."/>
            <person name="de Macario E.C."/>
            <person name="Ferry J.G."/>
            <person name="Jarrell K.F."/>
            <person name="Jing H."/>
            <person name="Macario A.J.L."/>
            <person name="Paulsen I.T."/>
            <person name="Pritchett M."/>
            <person name="Sowers K.R."/>
            <person name="Swanson R.V."/>
            <person name="Zinder S.H."/>
            <person name="Lander E."/>
            <person name="Metcalf W.W."/>
            <person name="Birren B."/>
        </authorList>
    </citation>
    <scope>NUCLEOTIDE SEQUENCE [LARGE SCALE GENOMIC DNA]</scope>
    <source>
        <strain>ATCC 35395 / DSM 2834 / JCM 12185 / C2A</strain>
    </source>
</reference>
<proteinExistence type="inferred from homology"/>
<sequence>MTLLSSNELRKLIQATPHLLENAVDIETQIQPNGLELTLKEIKTIEGVGAVDFDNSERKVPDAKPLEFEDDDWIHLPKGIYKVIFNEIVNIPMNLAAIAKPRSSLIRCGATLETAVWDAGYRGRSESMLVVYNSAGFRLKKNARIMQLLFYTLNSEVEEGYSGVYQNENTK</sequence>
<evidence type="ECO:0000255" key="1">
    <source>
        <dbReference type="HAMAP-Rule" id="MF_00635"/>
    </source>
</evidence>
<comment type="function">
    <text evidence="1">This enzyme is involved in nucleotide metabolism: it produces dUMP, the immediate precursor of thymidine nucleotides and it decreases the intracellular concentration of dUTP so that uracil cannot be incorporated into DNA.</text>
</comment>
<comment type="catalytic activity">
    <reaction evidence="1">
        <text>dUTP + H2O = dUMP + diphosphate + H(+)</text>
        <dbReference type="Rhea" id="RHEA:10248"/>
        <dbReference type="ChEBI" id="CHEBI:15377"/>
        <dbReference type="ChEBI" id="CHEBI:15378"/>
        <dbReference type="ChEBI" id="CHEBI:33019"/>
        <dbReference type="ChEBI" id="CHEBI:61555"/>
        <dbReference type="ChEBI" id="CHEBI:246422"/>
        <dbReference type="EC" id="3.6.1.23"/>
    </reaction>
</comment>
<comment type="pathway">
    <text evidence="1">Pyrimidine metabolism; dUMP biosynthesis; dUMP from dCTP (dUTP route): step 2/2.</text>
</comment>
<comment type="similarity">
    <text evidence="1">Belongs to the dCTP deaminase family. Archaeal dUTPase subfamily.</text>
</comment>
<protein>
    <recommendedName>
        <fullName evidence="1">Probable deoxyuridine 5'-triphosphate nucleotidohydrolase</fullName>
        <shortName evidence="1">dUTPase</shortName>
        <ecNumber evidence="1">3.6.1.23</ecNumber>
    </recommendedName>
    <alternativeName>
        <fullName evidence="1">dUTP pyrophosphatase</fullName>
    </alternativeName>
</protein>
<feature type="chain" id="PRO_0000153637" description="Probable deoxyuridine 5'-triphosphate nucleotidohydrolase">
    <location>
        <begin position="1"/>
        <end position="171"/>
    </location>
</feature>
<accession>Q8TGX9</accession>
<organism>
    <name type="scientific">Methanosarcina acetivorans (strain ATCC 35395 / DSM 2834 / JCM 12185 / C2A)</name>
    <dbReference type="NCBI Taxonomy" id="188937"/>
    <lineage>
        <taxon>Archaea</taxon>
        <taxon>Methanobacteriati</taxon>
        <taxon>Methanobacteriota</taxon>
        <taxon>Stenosarchaea group</taxon>
        <taxon>Methanomicrobia</taxon>
        <taxon>Methanosarcinales</taxon>
        <taxon>Methanosarcinaceae</taxon>
        <taxon>Methanosarcina</taxon>
    </lineage>
</organism>